<reference key="1">
    <citation type="journal article" date="2005" name="PLoS Biol.">
        <title>The genome sequence of Rickettsia felis identifies the first putative conjugative plasmid in an obligate intracellular parasite.</title>
        <authorList>
            <person name="Ogata H."/>
            <person name="Renesto P."/>
            <person name="Audic S."/>
            <person name="Robert C."/>
            <person name="Blanc G."/>
            <person name="Fournier P.-E."/>
            <person name="Parinello H."/>
            <person name="Claverie J.-M."/>
            <person name="Raoult D."/>
        </authorList>
    </citation>
    <scope>NUCLEOTIDE SEQUENCE [LARGE SCALE GENOMIC DNA]</scope>
    <source>
        <strain>ATCC VR-1525 / URRWXCal2</strain>
    </source>
</reference>
<sequence length="104" mass="11918">MTENKNFEFIENEIKNNKVVLFMKGTKEATMCGFSAKVVAILNKLGVEFRDINVFVNPEFREDLKKFSDWPTFPQLYIKGELVGGCDIATELYNNGELEKMLKG</sequence>
<comment type="similarity">
    <text evidence="3">Belongs to the glutaredoxin family. Monothiol subfamily.</text>
</comment>
<feature type="chain" id="PRO_0000288732" description="Probable monothiol glutaredoxin 2">
    <location>
        <begin position="1"/>
        <end position="104"/>
    </location>
</feature>
<feature type="domain" description="Glutaredoxin" evidence="2">
    <location>
        <begin position="7"/>
        <end position="104"/>
    </location>
</feature>
<feature type="binding site" evidence="1">
    <location>
        <position position="24"/>
    </location>
    <ligand>
        <name>glutathione</name>
        <dbReference type="ChEBI" id="CHEBI:57925"/>
    </ligand>
</feature>
<feature type="binding site" evidence="1">
    <location>
        <position position="32"/>
    </location>
    <ligand>
        <name>[2Fe-2S] cluster</name>
        <dbReference type="ChEBI" id="CHEBI:190135"/>
        <note>ligand shared between dimeric partners</note>
    </ligand>
</feature>
<feature type="binding site" evidence="1">
    <location>
        <position position="61"/>
    </location>
    <ligand>
        <name>glutathione</name>
        <dbReference type="ChEBI" id="CHEBI:57925"/>
    </ligand>
</feature>
<feature type="binding site" evidence="1">
    <location>
        <position position="73"/>
    </location>
    <ligand>
        <name>glutathione</name>
        <dbReference type="ChEBI" id="CHEBI:57925"/>
    </ligand>
</feature>
<feature type="binding site" evidence="1">
    <location>
        <begin position="86"/>
        <end position="87"/>
    </location>
    <ligand>
        <name>glutathione</name>
        <dbReference type="ChEBI" id="CHEBI:57925"/>
    </ligand>
</feature>
<organism>
    <name type="scientific">Rickettsia felis (strain ATCC VR-1525 / URRWXCal2)</name>
    <name type="common">Rickettsia azadi</name>
    <dbReference type="NCBI Taxonomy" id="315456"/>
    <lineage>
        <taxon>Bacteria</taxon>
        <taxon>Pseudomonadati</taxon>
        <taxon>Pseudomonadota</taxon>
        <taxon>Alphaproteobacteria</taxon>
        <taxon>Rickettsiales</taxon>
        <taxon>Rickettsiaceae</taxon>
        <taxon>Rickettsieae</taxon>
        <taxon>Rickettsia</taxon>
        <taxon>spotted fever group</taxon>
    </lineage>
</organism>
<dbReference type="EMBL" id="CP000053">
    <property type="protein sequence ID" value="AAY62041.1"/>
    <property type="molecule type" value="Genomic_DNA"/>
</dbReference>
<dbReference type="SMR" id="Q4UK94"/>
<dbReference type="STRING" id="315456.RF_1190"/>
<dbReference type="KEGG" id="rfe:RF_1190"/>
<dbReference type="eggNOG" id="COG0278">
    <property type="taxonomic scope" value="Bacteria"/>
</dbReference>
<dbReference type="HOGENOM" id="CLU_026126_2_1_5"/>
<dbReference type="OrthoDB" id="9804115at2"/>
<dbReference type="Proteomes" id="UP000008548">
    <property type="component" value="Chromosome"/>
</dbReference>
<dbReference type="GO" id="GO:0051537">
    <property type="term" value="F:2 iron, 2 sulfur cluster binding"/>
    <property type="evidence" value="ECO:0007669"/>
    <property type="project" value="UniProtKB-KW"/>
</dbReference>
<dbReference type="GO" id="GO:0015036">
    <property type="term" value="F:disulfide oxidoreductase activity"/>
    <property type="evidence" value="ECO:0007669"/>
    <property type="project" value="InterPro"/>
</dbReference>
<dbReference type="GO" id="GO:0046872">
    <property type="term" value="F:metal ion binding"/>
    <property type="evidence" value="ECO:0007669"/>
    <property type="project" value="UniProtKB-KW"/>
</dbReference>
<dbReference type="CDD" id="cd03028">
    <property type="entry name" value="GRX_PICOT_like"/>
    <property type="match status" value="1"/>
</dbReference>
<dbReference type="FunFam" id="3.40.30.10:FF:000005">
    <property type="entry name" value="Glutaredoxin 5"/>
    <property type="match status" value="1"/>
</dbReference>
<dbReference type="Gene3D" id="3.40.30.10">
    <property type="entry name" value="Glutaredoxin"/>
    <property type="match status" value="1"/>
</dbReference>
<dbReference type="InterPro" id="IPR002109">
    <property type="entry name" value="Glutaredoxin"/>
</dbReference>
<dbReference type="InterPro" id="IPR033658">
    <property type="entry name" value="GRX_PICOT-like"/>
</dbReference>
<dbReference type="InterPro" id="IPR014434">
    <property type="entry name" value="Monothiol_GRX"/>
</dbReference>
<dbReference type="InterPro" id="IPR004480">
    <property type="entry name" value="Monothiol_GRX-rel"/>
</dbReference>
<dbReference type="InterPro" id="IPR036249">
    <property type="entry name" value="Thioredoxin-like_sf"/>
</dbReference>
<dbReference type="NCBIfam" id="TIGR00365">
    <property type="entry name" value="Grx4 family monothiol glutaredoxin"/>
    <property type="match status" value="1"/>
</dbReference>
<dbReference type="PANTHER" id="PTHR10293">
    <property type="entry name" value="GLUTAREDOXIN FAMILY MEMBER"/>
    <property type="match status" value="1"/>
</dbReference>
<dbReference type="PANTHER" id="PTHR10293:SF16">
    <property type="entry name" value="GLUTAREDOXIN-RELATED PROTEIN 5, MITOCHONDRIAL"/>
    <property type="match status" value="1"/>
</dbReference>
<dbReference type="Pfam" id="PF00462">
    <property type="entry name" value="Glutaredoxin"/>
    <property type="match status" value="1"/>
</dbReference>
<dbReference type="PIRSF" id="PIRSF005894">
    <property type="entry name" value="Monothiol_GRX"/>
    <property type="match status" value="1"/>
</dbReference>
<dbReference type="SUPFAM" id="SSF52833">
    <property type="entry name" value="Thioredoxin-like"/>
    <property type="match status" value="1"/>
</dbReference>
<dbReference type="PROSITE" id="PS51354">
    <property type="entry name" value="GLUTAREDOXIN_2"/>
    <property type="match status" value="1"/>
</dbReference>
<evidence type="ECO:0000250" key="1"/>
<evidence type="ECO:0000255" key="2">
    <source>
        <dbReference type="PROSITE-ProRule" id="PRU00686"/>
    </source>
</evidence>
<evidence type="ECO:0000305" key="3"/>
<proteinExistence type="inferred from homology"/>
<keyword id="KW-0001">2Fe-2S</keyword>
<keyword id="KW-0408">Iron</keyword>
<keyword id="KW-0411">Iron-sulfur</keyword>
<keyword id="KW-0479">Metal-binding</keyword>
<keyword id="KW-0676">Redox-active center</keyword>
<name>GLRX2_RICFE</name>
<accession>Q4UK94</accession>
<gene>
    <name type="primary">grxC2</name>
    <name type="synonym">grlA</name>
    <name type="ordered locus">RF_1190</name>
</gene>
<protein>
    <recommendedName>
        <fullName>Probable monothiol glutaredoxin 2</fullName>
    </recommendedName>
</protein>